<gene>
    <name evidence="1" type="primary">fabZ</name>
    <name type="ordered locus">SP70585_0495</name>
</gene>
<accession>C1C5G1</accession>
<organism>
    <name type="scientific">Streptococcus pneumoniae (strain 70585)</name>
    <dbReference type="NCBI Taxonomy" id="488221"/>
    <lineage>
        <taxon>Bacteria</taxon>
        <taxon>Bacillati</taxon>
        <taxon>Bacillota</taxon>
        <taxon>Bacilli</taxon>
        <taxon>Lactobacillales</taxon>
        <taxon>Streptococcaceae</taxon>
        <taxon>Streptococcus</taxon>
    </lineage>
</organism>
<proteinExistence type="inferred from homology"/>
<feature type="chain" id="PRO_1000134712" description="3-hydroxyacyl-[acyl-carrier-protein] dehydratase FabZ">
    <location>
        <begin position="1"/>
        <end position="140"/>
    </location>
</feature>
<feature type="active site" evidence="1">
    <location>
        <position position="47"/>
    </location>
</feature>
<keyword id="KW-0963">Cytoplasm</keyword>
<keyword id="KW-0441">Lipid A biosynthesis</keyword>
<keyword id="KW-0444">Lipid biosynthesis</keyword>
<keyword id="KW-0443">Lipid metabolism</keyword>
<keyword id="KW-0456">Lyase</keyword>
<evidence type="ECO:0000255" key="1">
    <source>
        <dbReference type="HAMAP-Rule" id="MF_00406"/>
    </source>
</evidence>
<reference key="1">
    <citation type="journal article" date="2010" name="Genome Biol.">
        <title>Structure and dynamics of the pan-genome of Streptococcus pneumoniae and closely related species.</title>
        <authorList>
            <person name="Donati C."/>
            <person name="Hiller N.L."/>
            <person name="Tettelin H."/>
            <person name="Muzzi A."/>
            <person name="Croucher N.J."/>
            <person name="Angiuoli S.V."/>
            <person name="Oggioni M."/>
            <person name="Dunning Hotopp J.C."/>
            <person name="Hu F.Z."/>
            <person name="Riley D.R."/>
            <person name="Covacci A."/>
            <person name="Mitchell T.J."/>
            <person name="Bentley S.D."/>
            <person name="Kilian M."/>
            <person name="Ehrlich G.D."/>
            <person name="Rappuoli R."/>
            <person name="Moxon E.R."/>
            <person name="Masignani V."/>
        </authorList>
    </citation>
    <scope>NUCLEOTIDE SEQUENCE [LARGE SCALE GENOMIC DNA]</scope>
    <source>
        <strain>70585</strain>
    </source>
</reference>
<comment type="function">
    <text evidence="1">Involved in unsaturated fatty acids biosynthesis. Catalyzes the dehydration of short chain beta-hydroxyacyl-ACPs and long chain saturated and unsaturated beta-hydroxyacyl-ACPs.</text>
</comment>
<comment type="catalytic activity">
    <reaction evidence="1">
        <text>a (3R)-hydroxyacyl-[ACP] = a (2E)-enoyl-[ACP] + H2O</text>
        <dbReference type="Rhea" id="RHEA:13097"/>
        <dbReference type="Rhea" id="RHEA-COMP:9925"/>
        <dbReference type="Rhea" id="RHEA-COMP:9945"/>
        <dbReference type="ChEBI" id="CHEBI:15377"/>
        <dbReference type="ChEBI" id="CHEBI:78784"/>
        <dbReference type="ChEBI" id="CHEBI:78827"/>
        <dbReference type="EC" id="4.2.1.59"/>
    </reaction>
</comment>
<comment type="subcellular location">
    <subcellularLocation>
        <location evidence="1">Cytoplasm</location>
    </subcellularLocation>
</comment>
<comment type="similarity">
    <text evidence="1">Belongs to the thioester dehydratase family. FabZ subfamily.</text>
</comment>
<sequence>MIDIQGIKEALPHRYPMLLVDRVLEVSEDTIVAIKNVTINEPFFNGHFPQYPVMPGVLIMEALAQTAGVLELSKPENKGKLVFYAGMDKVKFKKQVVPGDQLVMTATFVKRRGTIAVVEAKAEVDGKLAASGTLTFAIGN</sequence>
<protein>
    <recommendedName>
        <fullName evidence="1">3-hydroxyacyl-[acyl-carrier-protein] dehydratase FabZ</fullName>
        <ecNumber evidence="1">4.2.1.59</ecNumber>
    </recommendedName>
    <alternativeName>
        <fullName evidence="1">(3R)-hydroxymyristoyl-[acyl-carrier-protein] dehydratase</fullName>
        <shortName evidence="1">(3R)-hydroxymyristoyl-ACP dehydrase</shortName>
    </alternativeName>
    <alternativeName>
        <fullName evidence="1">Beta-hydroxyacyl-ACP dehydratase</fullName>
    </alternativeName>
</protein>
<name>FABZ_STRP7</name>
<dbReference type="EC" id="4.2.1.59" evidence="1"/>
<dbReference type="EMBL" id="CP000918">
    <property type="protein sequence ID" value="ACO16607.1"/>
    <property type="molecule type" value="Genomic_DNA"/>
</dbReference>
<dbReference type="RefSeq" id="WP_000565515.1">
    <property type="nucleotide sequence ID" value="NC_012468.1"/>
</dbReference>
<dbReference type="SMR" id="C1C5G1"/>
<dbReference type="GeneID" id="49599193"/>
<dbReference type="KEGG" id="snm:SP70585_0495"/>
<dbReference type="HOGENOM" id="CLU_078912_1_2_9"/>
<dbReference type="Proteomes" id="UP000002211">
    <property type="component" value="Chromosome"/>
</dbReference>
<dbReference type="GO" id="GO:0005737">
    <property type="term" value="C:cytoplasm"/>
    <property type="evidence" value="ECO:0007669"/>
    <property type="project" value="UniProtKB-SubCell"/>
</dbReference>
<dbReference type="GO" id="GO:0016020">
    <property type="term" value="C:membrane"/>
    <property type="evidence" value="ECO:0007669"/>
    <property type="project" value="GOC"/>
</dbReference>
<dbReference type="GO" id="GO:0019171">
    <property type="term" value="F:(3R)-hydroxyacyl-[acyl-carrier-protein] dehydratase activity"/>
    <property type="evidence" value="ECO:0007669"/>
    <property type="project" value="UniProtKB-EC"/>
</dbReference>
<dbReference type="GO" id="GO:0006633">
    <property type="term" value="P:fatty acid biosynthetic process"/>
    <property type="evidence" value="ECO:0007669"/>
    <property type="project" value="UniProtKB-UniRule"/>
</dbReference>
<dbReference type="GO" id="GO:0009245">
    <property type="term" value="P:lipid A biosynthetic process"/>
    <property type="evidence" value="ECO:0007669"/>
    <property type="project" value="UniProtKB-UniRule"/>
</dbReference>
<dbReference type="CDD" id="cd01288">
    <property type="entry name" value="FabZ"/>
    <property type="match status" value="1"/>
</dbReference>
<dbReference type="FunFam" id="3.10.129.10:FF:000001">
    <property type="entry name" value="3-hydroxyacyl-[acyl-carrier-protein] dehydratase FabZ"/>
    <property type="match status" value="1"/>
</dbReference>
<dbReference type="Gene3D" id="3.10.129.10">
    <property type="entry name" value="Hotdog Thioesterase"/>
    <property type="match status" value="1"/>
</dbReference>
<dbReference type="HAMAP" id="MF_00406">
    <property type="entry name" value="FabZ"/>
    <property type="match status" value="1"/>
</dbReference>
<dbReference type="InterPro" id="IPR013114">
    <property type="entry name" value="FabA_FabZ"/>
</dbReference>
<dbReference type="InterPro" id="IPR010084">
    <property type="entry name" value="FabZ"/>
</dbReference>
<dbReference type="InterPro" id="IPR029069">
    <property type="entry name" value="HotDog_dom_sf"/>
</dbReference>
<dbReference type="NCBIfam" id="TIGR01750">
    <property type="entry name" value="fabZ"/>
    <property type="match status" value="1"/>
</dbReference>
<dbReference type="NCBIfam" id="NF000582">
    <property type="entry name" value="PRK00006.1"/>
    <property type="match status" value="1"/>
</dbReference>
<dbReference type="PANTHER" id="PTHR30272">
    <property type="entry name" value="3-HYDROXYACYL-[ACYL-CARRIER-PROTEIN] DEHYDRATASE"/>
    <property type="match status" value="1"/>
</dbReference>
<dbReference type="PANTHER" id="PTHR30272:SF1">
    <property type="entry name" value="3-HYDROXYACYL-[ACYL-CARRIER-PROTEIN] DEHYDRATASE"/>
    <property type="match status" value="1"/>
</dbReference>
<dbReference type="Pfam" id="PF07977">
    <property type="entry name" value="FabA"/>
    <property type="match status" value="1"/>
</dbReference>
<dbReference type="SUPFAM" id="SSF54637">
    <property type="entry name" value="Thioesterase/thiol ester dehydrase-isomerase"/>
    <property type="match status" value="1"/>
</dbReference>